<comment type="function">
    <text evidence="9">Cell surface protein involved in cell-cell-interactions via its interactions with neurexin family members. Plays a role in synapse function and synaptic signal transmission, and probably mediates its effects by recruiting and clustering other synaptic proteins. May promote the initial formation of synapses, but is not essential for this. May also play a role in glia-glia or glia-neuron interactions in the developing peripheral nervous system.</text>
</comment>
<comment type="subunit">
    <text evidence="2 3 7 12 13">Homodimer, and heterodimer with NLGN1 and NLGN2 (By similarity). Interacts with neurexins NRXN1, NRXN2 and NRXN3 (PubMed:15152050, PubMed:20624592, PubMed:8576240). Interaction with neurexins is mediated by heparan sulfate glycan modification on neurexin (By similarity). Interacts (via its C-terminus) with DLG4/PSD-95 (via PDZ domain 3) (By similarity).</text>
</comment>
<comment type="subcellular location">
    <subcellularLocation>
        <location>Cell membrane</location>
        <topology>Single-pass type I membrane protein</topology>
    </subcellularLocation>
    <subcellularLocation>
        <location>Synapse</location>
    </subcellularLocation>
    <text>Detected at both glutamatergic and GABAergic synapses.</text>
</comment>
<comment type="alternative products">
    <event type="alternative splicing"/>
    <isoform>
        <id>Q62889-1</id>
        <name>1</name>
        <sequence type="displayed"/>
    </isoform>
    <isoform>
        <id>Q62889-2</id>
        <name>2</name>
        <sequence type="described" ref="VSP_007535 VSP_007536"/>
    </isoform>
    <isoform>
        <id>Q62889-3</id>
        <name>3</name>
        <sequence type="described" ref="VSP_007536"/>
    </isoform>
    <isoform>
        <id>Q62889-4</id>
        <name>4</name>
        <sequence type="described" ref="VSP_007535"/>
    </isoform>
</comment>
<comment type="tissue specificity">
    <text evidence="6 8 9 10 11 13">Detected in brain and on hippocampus neurons, especially at excitatory synapses. Detected in retina (at protein level). Expressed in brain, spinal cord and dorsal root ganglion.</text>
</comment>
<comment type="PTM">
    <text>The N-terminus is blocked.</text>
</comment>
<comment type="similarity">
    <text evidence="15">Belongs to the type-B carboxylesterase/lipase family.</text>
</comment>
<gene>
    <name type="primary">Nlgn3</name>
</gene>
<evidence type="ECO:0000250" key="1"/>
<evidence type="ECO:0000250" key="2">
    <source>
        <dbReference type="UniProtKB" id="Q8BYM5"/>
    </source>
</evidence>
<evidence type="ECO:0000250" key="3">
    <source>
        <dbReference type="UniProtKB" id="Q9NZ94"/>
    </source>
</evidence>
<evidence type="ECO:0000255" key="4"/>
<evidence type="ECO:0000256" key="5">
    <source>
        <dbReference type="SAM" id="MobiDB-lite"/>
    </source>
</evidence>
<evidence type="ECO:0000269" key="6">
    <source>
    </source>
</evidence>
<evidence type="ECO:0000269" key="7">
    <source>
    </source>
</evidence>
<evidence type="ECO:0000269" key="8">
    <source>
    </source>
</evidence>
<evidence type="ECO:0000269" key="9">
    <source>
    </source>
</evidence>
<evidence type="ECO:0000269" key="10">
    <source>
    </source>
</evidence>
<evidence type="ECO:0000269" key="11">
    <source>
    </source>
</evidence>
<evidence type="ECO:0000269" key="12">
    <source>
    </source>
</evidence>
<evidence type="ECO:0000269" key="13">
    <source>
    </source>
</evidence>
<evidence type="ECO:0000303" key="14">
    <source>
    </source>
</evidence>
<evidence type="ECO:0000305" key="15"/>
<evidence type="ECO:0007744" key="16">
    <source>
    </source>
</evidence>
<accession>Q62889</accession>
<protein>
    <recommendedName>
        <fullName>Neuroligin-3</fullName>
    </recommendedName>
    <alternativeName>
        <fullName>Gliotactin homolog</fullName>
    </alternativeName>
</protein>
<dbReference type="EMBL" id="U41663">
    <property type="protein sequence ID" value="AAA97871.1"/>
    <property type="molecule type" value="mRNA"/>
</dbReference>
<dbReference type="RefSeq" id="NP_599163.2">
    <property type="nucleotide sequence ID" value="NM_134336.2"/>
</dbReference>
<dbReference type="SMR" id="Q62889"/>
<dbReference type="BioGRID" id="251173">
    <property type="interactions" value="2"/>
</dbReference>
<dbReference type="FunCoup" id="Q62889">
    <property type="interactions" value="1139"/>
</dbReference>
<dbReference type="IntAct" id="Q62889">
    <property type="interactions" value="1"/>
</dbReference>
<dbReference type="MINT" id="Q62889"/>
<dbReference type="STRING" id="10116.ENSRNOP00000005077"/>
<dbReference type="ESTHER" id="ratno-3neur">
    <property type="family name" value="Neuroligin"/>
</dbReference>
<dbReference type="MEROPS" id="S09.987"/>
<dbReference type="GlyCosmos" id="Q62889">
    <property type="glycosylation" value="2 sites, No reported glycans"/>
</dbReference>
<dbReference type="GlyGen" id="Q62889">
    <property type="glycosylation" value="4 sites"/>
</dbReference>
<dbReference type="iPTMnet" id="Q62889"/>
<dbReference type="PhosphoSitePlus" id="Q62889"/>
<dbReference type="PaxDb" id="10116-ENSRNOP00000005077"/>
<dbReference type="ABCD" id="Q62889">
    <property type="antibodies" value="1 sequenced antibody"/>
</dbReference>
<dbReference type="GeneID" id="171297"/>
<dbReference type="KEGG" id="rno:171297"/>
<dbReference type="UCSC" id="RGD:621119">
    <molecule id="Q62889-1"/>
    <property type="organism name" value="rat"/>
</dbReference>
<dbReference type="AGR" id="RGD:621119"/>
<dbReference type="CTD" id="54413"/>
<dbReference type="RGD" id="621119">
    <property type="gene designation" value="Nlgn3"/>
</dbReference>
<dbReference type="eggNOG" id="KOG1516">
    <property type="taxonomic scope" value="Eukaryota"/>
</dbReference>
<dbReference type="InParanoid" id="Q62889"/>
<dbReference type="OrthoDB" id="6846267at2759"/>
<dbReference type="PhylomeDB" id="Q62889"/>
<dbReference type="Reactome" id="R-RNO-6794361">
    <property type="pathway name" value="Neurexins and neuroligins"/>
</dbReference>
<dbReference type="PRO" id="PR:Q62889"/>
<dbReference type="Proteomes" id="UP000002494">
    <property type="component" value="Unplaced"/>
</dbReference>
<dbReference type="GO" id="GO:0009986">
    <property type="term" value="C:cell surface"/>
    <property type="evidence" value="ECO:0000314"/>
    <property type="project" value="BHF-UCL"/>
</dbReference>
<dbReference type="GO" id="GO:0030425">
    <property type="term" value="C:dendrite"/>
    <property type="evidence" value="ECO:0000314"/>
    <property type="project" value="RGD"/>
</dbReference>
<dbReference type="GO" id="GO:0030139">
    <property type="term" value="C:endocytic vesicle"/>
    <property type="evidence" value="ECO:0000314"/>
    <property type="project" value="BHF-UCL"/>
</dbReference>
<dbReference type="GO" id="GO:0060076">
    <property type="term" value="C:excitatory synapse"/>
    <property type="evidence" value="ECO:0000314"/>
    <property type="project" value="BHF-UCL"/>
</dbReference>
<dbReference type="GO" id="GO:0098982">
    <property type="term" value="C:GABA-ergic synapse"/>
    <property type="evidence" value="ECO:0000314"/>
    <property type="project" value="SynGO"/>
</dbReference>
<dbReference type="GO" id="GO:0098978">
    <property type="term" value="C:glutamatergic synapse"/>
    <property type="evidence" value="ECO:0000314"/>
    <property type="project" value="SynGO"/>
</dbReference>
<dbReference type="GO" id="GO:0060077">
    <property type="term" value="C:inhibitory synapse"/>
    <property type="evidence" value="ECO:0000314"/>
    <property type="project" value="RGD"/>
</dbReference>
<dbReference type="GO" id="GO:0043025">
    <property type="term" value="C:neuronal cell body"/>
    <property type="evidence" value="ECO:0000314"/>
    <property type="project" value="RGD"/>
</dbReference>
<dbReference type="GO" id="GO:0005886">
    <property type="term" value="C:plasma membrane"/>
    <property type="evidence" value="ECO:0000318"/>
    <property type="project" value="GO_Central"/>
</dbReference>
<dbReference type="GO" id="GO:0045211">
    <property type="term" value="C:postsynaptic membrane"/>
    <property type="evidence" value="ECO:0000314"/>
    <property type="project" value="BHF-UCL"/>
</dbReference>
<dbReference type="GO" id="GO:0099634">
    <property type="term" value="C:postsynaptic specialization membrane"/>
    <property type="evidence" value="ECO:0000314"/>
    <property type="project" value="SynGO"/>
</dbReference>
<dbReference type="GO" id="GO:0098793">
    <property type="term" value="C:presynapse"/>
    <property type="evidence" value="ECO:0007669"/>
    <property type="project" value="GOC"/>
</dbReference>
<dbReference type="GO" id="GO:0045202">
    <property type="term" value="C:synapse"/>
    <property type="evidence" value="ECO:0000314"/>
    <property type="project" value="MGI"/>
</dbReference>
<dbReference type="GO" id="GO:0050839">
    <property type="term" value="F:cell adhesion molecule binding"/>
    <property type="evidence" value="ECO:0000353"/>
    <property type="project" value="BHF-UCL"/>
</dbReference>
<dbReference type="GO" id="GO:0042043">
    <property type="term" value="F:neurexin family protein binding"/>
    <property type="evidence" value="ECO:0000353"/>
    <property type="project" value="BHF-UCL"/>
</dbReference>
<dbReference type="GO" id="GO:0097110">
    <property type="term" value="F:scaffold protein binding"/>
    <property type="evidence" value="ECO:0000266"/>
    <property type="project" value="RGD"/>
</dbReference>
<dbReference type="GO" id="GO:0038023">
    <property type="term" value="F:signaling receptor activity"/>
    <property type="evidence" value="ECO:0000314"/>
    <property type="project" value="BHF-UCL"/>
</dbReference>
<dbReference type="GO" id="GO:0030534">
    <property type="term" value="P:adult behavior"/>
    <property type="evidence" value="ECO:0000266"/>
    <property type="project" value="RGD"/>
</dbReference>
<dbReference type="GO" id="GO:0048675">
    <property type="term" value="P:axon extension"/>
    <property type="evidence" value="ECO:0000315"/>
    <property type="project" value="BHF-UCL"/>
</dbReference>
<dbReference type="GO" id="GO:0007268">
    <property type="term" value="P:chemical synaptic transmission"/>
    <property type="evidence" value="ECO:0000318"/>
    <property type="project" value="GO_Central"/>
</dbReference>
<dbReference type="GO" id="GO:0042745">
    <property type="term" value="P:circadian sleep/wake cycle"/>
    <property type="evidence" value="ECO:0000315"/>
    <property type="project" value="RGD"/>
</dbReference>
<dbReference type="GO" id="GO:0060079">
    <property type="term" value="P:excitatory postsynaptic potential"/>
    <property type="evidence" value="ECO:0000250"/>
    <property type="project" value="BHF-UCL"/>
</dbReference>
<dbReference type="GO" id="GO:0060080">
    <property type="term" value="P:inhibitory postsynaptic potential"/>
    <property type="evidence" value="ECO:0000314"/>
    <property type="project" value="BHF-UCL"/>
</dbReference>
<dbReference type="GO" id="GO:0007612">
    <property type="term" value="P:learning"/>
    <property type="evidence" value="ECO:0000266"/>
    <property type="project" value="RGD"/>
</dbReference>
<dbReference type="GO" id="GO:0060291">
    <property type="term" value="P:long-term synaptic potentiation"/>
    <property type="evidence" value="ECO:0000266"/>
    <property type="project" value="RGD"/>
</dbReference>
<dbReference type="GO" id="GO:0050804">
    <property type="term" value="P:modulation of chemical synaptic transmission"/>
    <property type="evidence" value="ECO:0000250"/>
    <property type="project" value="BHF-UCL"/>
</dbReference>
<dbReference type="GO" id="GO:0061002">
    <property type="term" value="P:negative regulation of dendritic spine morphogenesis"/>
    <property type="evidence" value="ECO:0000266"/>
    <property type="project" value="RGD"/>
</dbReference>
<dbReference type="GO" id="GO:0090394">
    <property type="term" value="P:negative regulation of excitatory postsynaptic potential"/>
    <property type="evidence" value="ECO:0000266"/>
    <property type="project" value="RGD"/>
</dbReference>
<dbReference type="GO" id="GO:0007158">
    <property type="term" value="P:neuron cell-cell adhesion"/>
    <property type="evidence" value="ECO:0000314"/>
    <property type="project" value="BHF-UCL"/>
</dbReference>
<dbReference type="GO" id="GO:0048709">
    <property type="term" value="P:oligodendrocyte differentiation"/>
    <property type="evidence" value="ECO:0000266"/>
    <property type="project" value="RGD"/>
</dbReference>
<dbReference type="GO" id="GO:0060999">
    <property type="term" value="P:positive regulation of dendritic spine development"/>
    <property type="evidence" value="ECO:0000315"/>
    <property type="project" value="RGD"/>
</dbReference>
<dbReference type="GO" id="GO:2000463">
    <property type="term" value="P:positive regulation of excitatory postsynaptic potential"/>
    <property type="evidence" value="ECO:0000250"/>
    <property type="project" value="BHF-UCL"/>
</dbReference>
<dbReference type="GO" id="GO:1900451">
    <property type="term" value="P:positive regulation of glutamate receptor signaling pathway"/>
    <property type="evidence" value="ECO:0000250"/>
    <property type="project" value="BHF-UCL"/>
</dbReference>
<dbReference type="GO" id="GO:0097151">
    <property type="term" value="P:positive regulation of inhibitory postsynaptic potential"/>
    <property type="evidence" value="ECO:0000314"/>
    <property type="project" value="RGD"/>
</dbReference>
<dbReference type="GO" id="GO:1902474">
    <property type="term" value="P:positive regulation of protein localization to synapse"/>
    <property type="evidence" value="ECO:0000315"/>
    <property type="project" value="RGD"/>
</dbReference>
<dbReference type="GO" id="GO:0051965">
    <property type="term" value="P:positive regulation of synapse assembly"/>
    <property type="evidence" value="ECO:0000314"/>
    <property type="project" value="BHF-UCL"/>
</dbReference>
<dbReference type="GO" id="GO:0051968">
    <property type="term" value="P:positive regulation of synaptic transmission, glutamatergic"/>
    <property type="evidence" value="ECO:0000250"/>
    <property type="project" value="BHF-UCL"/>
</dbReference>
<dbReference type="GO" id="GO:2000809">
    <property type="term" value="P:positive regulation of synaptic vesicle clustering"/>
    <property type="evidence" value="ECO:0000266"/>
    <property type="project" value="RGD"/>
</dbReference>
<dbReference type="GO" id="GO:0097104">
    <property type="term" value="P:postsynaptic membrane assembly"/>
    <property type="evidence" value="ECO:0000250"/>
    <property type="project" value="BHF-UCL"/>
</dbReference>
<dbReference type="GO" id="GO:0098698">
    <property type="term" value="P:postsynaptic specialization assembly"/>
    <property type="evidence" value="ECO:0000314"/>
    <property type="project" value="SynGO"/>
</dbReference>
<dbReference type="GO" id="GO:0060134">
    <property type="term" value="P:prepulse inhibition"/>
    <property type="evidence" value="ECO:0000315"/>
    <property type="project" value="RGD"/>
</dbReference>
<dbReference type="GO" id="GO:0097105">
    <property type="term" value="P:presynaptic membrane assembly"/>
    <property type="evidence" value="ECO:0000314"/>
    <property type="project" value="BHF-UCL"/>
</dbReference>
<dbReference type="GO" id="GO:0006898">
    <property type="term" value="P:receptor-mediated endocytosis"/>
    <property type="evidence" value="ECO:0000314"/>
    <property type="project" value="BHF-UCL"/>
</dbReference>
<dbReference type="GO" id="GO:0061001">
    <property type="term" value="P:regulation of dendritic spine morphogenesis"/>
    <property type="evidence" value="ECO:0000250"/>
    <property type="project" value="BHF-UCL"/>
</dbReference>
<dbReference type="GO" id="GO:1900271">
    <property type="term" value="P:regulation of long-term synaptic potentiation"/>
    <property type="evidence" value="ECO:0000250"/>
    <property type="project" value="BHF-UCL"/>
</dbReference>
<dbReference type="GO" id="GO:0002087">
    <property type="term" value="P:regulation of respiratory gaseous exchange by nervous system process"/>
    <property type="evidence" value="ECO:0000250"/>
    <property type="project" value="BHF-UCL"/>
</dbReference>
<dbReference type="GO" id="GO:0051966">
    <property type="term" value="P:regulation of synaptic transmission, glutamatergic"/>
    <property type="evidence" value="ECO:0000250"/>
    <property type="project" value="BHF-UCL"/>
</dbReference>
<dbReference type="GO" id="GO:2000331">
    <property type="term" value="P:regulation of terminal button organization"/>
    <property type="evidence" value="ECO:0000250"/>
    <property type="project" value="BHF-UCL"/>
</dbReference>
<dbReference type="GO" id="GO:0060024">
    <property type="term" value="P:rhythmic synaptic transmission"/>
    <property type="evidence" value="ECO:0000315"/>
    <property type="project" value="BHF-UCL"/>
</dbReference>
<dbReference type="GO" id="GO:0035176">
    <property type="term" value="P:social behavior"/>
    <property type="evidence" value="ECO:0000250"/>
    <property type="project" value="BHF-UCL"/>
</dbReference>
<dbReference type="GO" id="GO:0007416">
    <property type="term" value="P:synapse assembly"/>
    <property type="evidence" value="ECO:0000314"/>
    <property type="project" value="BHF-UCL"/>
</dbReference>
<dbReference type="GO" id="GO:0050808">
    <property type="term" value="P:synapse organization"/>
    <property type="evidence" value="ECO:0000314"/>
    <property type="project" value="MGI"/>
</dbReference>
<dbReference type="GO" id="GO:0048488">
    <property type="term" value="P:synaptic vesicle endocytosis"/>
    <property type="evidence" value="ECO:0000318"/>
    <property type="project" value="GO_Central"/>
</dbReference>
<dbReference type="GO" id="GO:0008542">
    <property type="term" value="P:visual learning"/>
    <property type="evidence" value="ECO:0000266"/>
    <property type="project" value="RGD"/>
</dbReference>
<dbReference type="GO" id="GO:0071625">
    <property type="term" value="P:vocalization behavior"/>
    <property type="evidence" value="ECO:0000266"/>
    <property type="project" value="RGD"/>
</dbReference>
<dbReference type="FunFam" id="3.40.50.1820:FF:000001">
    <property type="entry name" value="Neuroligin 3 isoform"/>
    <property type="match status" value="1"/>
</dbReference>
<dbReference type="Gene3D" id="3.40.50.1820">
    <property type="entry name" value="alpha/beta hydrolase"/>
    <property type="match status" value="1"/>
</dbReference>
<dbReference type="InterPro" id="IPR029058">
    <property type="entry name" value="AB_hydrolase_fold"/>
</dbReference>
<dbReference type="InterPro" id="IPR002018">
    <property type="entry name" value="CarbesteraseB"/>
</dbReference>
<dbReference type="InterPro" id="IPR019819">
    <property type="entry name" value="Carboxylesterase_B_CS"/>
</dbReference>
<dbReference type="InterPro" id="IPR051093">
    <property type="entry name" value="Neuroligin/BSAL"/>
</dbReference>
<dbReference type="InterPro" id="IPR000460">
    <property type="entry name" value="Nlgn"/>
</dbReference>
<dbReference type="PANTHER" id="PTHR43903">
    <property type="entry name" value="NEUROLIGIN"/>
    <property type="match status" value="1"/>
</dbReference>
<dbReference type="Pfam" id="PF00135">
    <property type="entry name" value="COesterase"/>
    <property type="match status" value="1"/>
</dbReference>
<dbReference type="PRINTS" id="PR01090">
    <property type="entry name" value="NEUROLIGIN"/>
</dbReference>
<dbReference type="SUPFAM" id="SSF53474">
    <property type="entry name" value="alpha/beta-Hydrolases"/>
    <property type="match status" value="1"/>
</dbReference>
<dbReference type="PROSITE" id="PS00941">
    <property type="entry name" value="CARBOXYLESTERASE_B_2"/>
    <property type="match status" value="1"/>
</dbReference>
<sequence>MWLQLGLPSLSLSPTPTVGRSLCLILWFLSLVLRASTQAPAPTVNTHFGKLRGARVPLPSEILGPVDQYLGVPYAAPPIGEKRFLPPEPPPSWSGIRNATHFPPVCPQNIHTAVPEVMLPVWFTANLDIVATYIQEPNEDCLYLNVYVPTEDVKRISKECARKPNKKICRKGGSGAKKQGEDLADNDGDEDEDIRDSGAKPVMVYIHGGSYMEGTGNMIDGSVLASYGNVIVITLNYRVGVLGFLSTGDQAAKGNYGLLDQIQALRWVSENIAFFGGDPRRITVFGSGIGASCVSLLTLSHHSEGLFQRAIIQSGSALSSWAVNYQPVKYTSLLADKVGCNVLDTVDMVDCLRQKSAKELVEQDIQPARYHVAFGPVIDGDVIPDDPEILMEQGEFLNYDIMLGVNQGEGLKFVEGVVDPEDGVSGTDFDYSVSNFVDNLYGYPEGKDTLRETIKFMYTDWADRDNPETRRKTLVALFTDHQWVEPSVVTADLHARYGSPTYFYAFYHHCQSLMKPAWSDAAHGDEVPYVFGVPMVGPTDLFPCNFSKNDVMLSAVVMTYWTNFAKTGDPNKPVPQDTKFIHTKANRFEEVAWSKYNPRDQLYLHIGLKPRVRDHYRATKVAFWKHLVPHLYNLHDMFHYTSTTTKVPPPDTTHSSHITRRPNGKTWSTKRPAISPAYSNENAPGSWNGDQDAGPLLVENPRDYSTELSVTIAVGASLLFLNVLAFAALYYRKDKRRQEPLRQPSPQRGTGAPELGTAPEEELAALQLGPTHHECEAGPPHDTLRLTALPDYTLTLRRSPDDIPLMTPNTITMIPNSLVGLQTLHPYNTFAAGFNSTGLPNSHSTTRV</sequence>
<feature type="signal peptide" evidence="4">
    <location>
        <begin position="1"/>
        <end position="37"/>
    </location>
</feature>
<feature type="chain" id="PRO_0000008647" description="Neuroligin-3">
    <location>
        <begin position="38"/>
        <end position="848"/>
    </location>
</feature>
<feature type="topological domain" description="Extracellular" evidence="4">
    <location>
        <begin position="38"/>
        <end position="709"/>
    </location>
</feature>
<feature type="transmembrane region" description="Helical" evidence="4">
    <location>
        <begin position="710"/>
        <end position="730"/>
    </location>
</feature>
<feature type="topological domain" description="Cytoplasmic" evidence="4">
    <location>
        <begin position="731"/>
        <end position="848"/>
    </location>
</feature>
<feature type="region of interest" description="Disordered" evidence="5">
    <location>
        <begin position="169"/>
        <end position="195"/>
    </location>
</feature>
<feature type="region of interest" description="Disordered" evidence="5">
    <location>
        <begin position="645"/>
        <end position="691"/>
    </location>
</feature>
<feature type="compositionally biased region" description="Acidic residues" evidence="5">
    <location>
        <begin position="182"/>
        <end position="194"/>
    </location>
</feature>
<feature type="compositionally biased region" description="Polar residues" evidence="5">
    <location>
        <begin position="645"/>
        <end position="656"/>
    </location>
</feature>
<feature type="compositionally biased region" description="Polar residues" evidence="5">
    <location>
        <begin position="677"/>
        <end position="689"/>
    </location>
</feature>
<feature type="modified residue" description="Phosphoserine" evidence="16">
    <location>
        <position position="745"/>
    </location>
</feature>
<feature type="modified residue" description="Phosphotyrosine" evidence="2">
    <location>
        <position position="792"/>
    </location>
</feature>
<feature type="glycosylation site" description="N-linked (GlcNAc...) asparagine" evidence="4">
    <location>
        <position position="98"/>
    </location>
</feature>
<feature type="glycosylation site" description="N-linked (GlcNAc...) asparagine" evidence="4">
    <location>
        <position position="545"/>
    </location>
</feature>
<feature type="disulfide bond" evidence="1">
    <location>
        <begin position="106"/>
        <end position="141"/>
    </location>
</feature>
<feature type="disulfide bond" evidence="1">
    <location>
        <begin position="340"/>
        <end position="351"/>
    </location>
</feature>
<feature type="disulfide bond" evidence="1">
    <location>
        <begin position="510"/>
        <end position="544"/>
    </location>
</feature>
<feature type="splice variant" id="VSP_007535" description="In isoform 2 and isoform 4." evidence="14">
    <location>
        <begin position="153"/>
        <end position="172"/>
    </location>
</feature>
<feature type="splice variant" id="VSP_007536" description="In isoform 2 and isoform 3." evidence="14">
    <location>
        <begin position="173"/>
        <end position="192"/>
    </location>
</feature>
<feature type="mutagenesis site" description="Impaired cell surface expression, and reduced interaction with NRXN1." evidence="7">
    <original>R</original>
    <variation>C</variation>
    <location>
        <position position="451"/>
    </location>
</feature>
<name>NLGN3_RAT</name>
<keyword id="KW-0025">Alternative splicing</keyword>
<keyword id="KW-0130">Cell adhesion</keyword>
<keyword id="KW-1003">Cell membrane</keyword>
<keyword id="KW-1015">Disulfide bond</keyword>
<keyword id="KW-0325">Glycoprotein</keyword>
<keyword id="KW-0472">Membrane</keyword>
<keyword id="KW-0597">Phosphoprotein</keyword>
<keyword id="KW-1185">Reference proteome</keyword>
<keyword id="KW-0732">Signal</keyword>
<keyword id="KW-0770">Synapse</keyword>
<keyword id="KW-0812">Transmembrane</keyword>
<keyword id="KW-1133">Transmembrane helix</keyword>
<reference key="1">
    <citation type="journal article" date="1996" name="J. Biol. Chem.">
        <title>Structures, alternative splicing, and neurexin binding of multiple neuroligins.</title>
        <authorList>
            <person name="Ichtchenko K."/>
            <person name="Nguyen T."/>
            <person name="Suedhof T.C."/>
        </authorList>
    </citation>
    <scope>NUCLEOTIDE SEQUENCE [MRNA] (ISOFORMS 1; 2; 3 AND 4)</scope>
    <scope>BLOCKAGE OF N-TERMINUS</scope>
    <scope>TISSUE SPECIFICITY</scope>
    <scope>INTERACTION WITH NEUREXIN 1-BETA; NEUREXIN 2-BETA AND NEUREXIN 3-BETA</scope>
    <source>
        <tissue>Forebrain</tissue>
    </source>
</reference>
<reference key="2">
    <citation type="journal article" date="2001" name="Glia">
        <title>Neuroligin 3 is a vertebrate gliotactin expressed in the olfactory ensheathing glia, a growth-promoting class of macroglia.</title>
        <authorList>
            <person name="Gilbert M."/>
            <person name="Smith J."/>
            <person name="Roskams A.J."/>
            <person name="Auld V.J."/>
        </authorList>
    </citation>
    <scope>TISSUE SPECIFICITY</scope>
</reference>
<reference key="3">
    <citation type="journal article" date="2004" name="J. Neurosci.">
        <title>The Arg451Cys-neuroligin-3 mutation associated with autism reveals a defect in protein processing.</title>
        <authorList>
            <person name="Comoletti D."/>
            <person name="De Jaco A."/>
            <person name="Jennings L.L."/>
            <person name="Flynn R.E."/>
            <person name="Gaietta G."/>
            <person name="Tsigelny I."/>
            <person name="Ellisman M.H."/>
            <person name="Taylor P."/>
        </authorList>
    </citation>
    <scope>MUTAGENESIS OF ARG-451</scope>
    <scope>SUBCELLULAR LOCATION</scope>
    <scope>INTERACTION WITH NRXN1</scope>
    <scope>IDENTIFICATION BY MASS SPECTROMETRY</scope>
</reference>
<reference key="4">
    <citation type="journal article" date="2006" name="Neuron">
        <title>Neuroligins determine synapse maturation and function.</title>
        <authorList>
            <person name="Varoqueaux F."/>
            <person name="Aramuni G."/>
            <person name="Rawson R.L."/>
            <person name="Mohrmann R."/>
            <person name="Missler M."/>
            <person name="Gottmann K."/>
            <person name="Zhang W."/>
            <person name="Sudhof T.C."/>
            <person name="Brose N."/>
        </authorList>
    </citation>
    <scope>TISSUE SPECIFICITY</scope>
</reference>
<reference key="5">
    <citation type="journal article" date="2007" name="Eur. J. Neurosci.">
        <title>Neuroligin-3 is a neuronal adhesion protein at GABAergic and glutamatergic synapses.</title>
        <authorList>
            <person name="Budreck E.C."/>
            <person name="Scheiffele P."/>
        </authorList>
    </citation>
    <scope>FUNCTION</scope>
    <scope>SUBCELLULAR LOCATION</scope>
    <scope>TISSUE SPECIFICITY</scope>
</reference>
<reference key="6">
    <citation type="journal article" date="2008" name="Endocrinology">
        <title>Expression of neurexin, neuroligin, and their cytoplasmic binding partners in the pancreatic beta-cells and the involvement of neuroligin in insulin secretion.</title>
        <authorList>
            <person name="Suckow A.T."/>
            <person name="Comoletti D."/>
            <person name="Waldrop M.A."/>
            <person name="Mosedale M."/>
            <person name="Egodage S."/>
            <person name="Taylor P."/>
            <person name="Chessler S.D."/>
        </authorList>
    </citation>
    <scope>TISSUE SPECIFICITY</scope>
    <scope>ALTERNATIVE SPLICING</scope>
</reference>
<reference key="7">
    <citation type="journal article" date="2010" name="Neuron">
        <title>Splice form dependence of beta-neurexin/neuroligin binding interactions.</title>
        <authorList>
            <person name="Koehnke J."/>
            <person name="Katsamba P.S."/>
            <person name="Ahlsen G."/>
            <person name="Bahna F."/>
            <person name="Vendome J."/>
            <person name="Honig B."/>
            <person name="Shapiro L."/>
            <person name="Jin X."/>
        </authorList>
    </citation>
    <scope>INTERACTION WITH NRXN1</scope>
</reference>
<reference key="8">
    <citation type="journal article" date="2010" name="Neuroscience">
        <title>Postsynaptic scaffolding molecules modulate the localization of neuroligins.</title>
        <authorList>
            <person name="Levinson J.N."/>
            <person name="Li R."/>
            <person name="Kang R."/>
            <person name="Moukhles H."/>
            <person name="El-Husseini A."/>
            <person name="Bamji S.X."/>
        </authorList>
    </citation>
    <scope>SUBCELLULAR LOCATION</scope>
    <scope>TISSUE SPECIFICITY</scope>
</reference>
<reference key="9">
    <citation type="journal article" date="2012" name="Nat. Commun.">
        <title>Quantitative maps of protein phosphorylation sites across 14 different rat organs and tissues.</title>
        <authorList>
            <person name="Lundby A."/>
            <person name="Secher A."/>
            <person name="Lage K."/>
            <person name="Nordsborg N.B."/>
            <person name="Dmytriyev A."/>
            <person name="Lundby C."/>
            <person name="Olsen J.V."/>
        </authorList>
    </citation>
    <scope>PHOSPHORYLATION [LARGE SCALE ANALYSIS] AT SER-745</scope>
    <scope>IDENTIFICATION BY MASS SPECTROMETRY [LARGE SCALE ANALYSIS]</scope>
</reference>
<organism>
    <name type="scientific">Rattus norvegicus</name>
    <name type="common">Rat</name>
    <dbReference type="NCBI Taxonomy" id="10116"/>
    <lineage>
        <taxon>Eukaryota</taxon>
        <taxon>Metazoa</taxon>
        <taxon>Chordata</taxon>
        <taxon>Craniata</taxon>
        <taxon>Vertebrata</taxon>
        <taxon>Euteleostomi</taxon>
        <taxon>Mammalia</taxon>
        <taxon>Eutheria</taxon>
        <taxon>Euarchontoglires</taxon>
        <taxon>Glires</taxon>
        <taxon>Rodentia</taxon>
        <taxon>Myomorpha</taxon>
        <taxon>Muroidea</taxon>
        <taxon>Muridae</taxon>
        <taxon>Murinae</taxon>
        <taxon>Rattus</taxon>
    </lineage>
</organism>
<proteinExistence type="evidence at protein level"/>